<keyword id="KW-0067">ATP-binding</keyword>
<keyword id="KW-0963">Cytoplasm</keyword>
<keyword id="KW-0418">Kinase</keyword>
<keyword id="KW-0547">Nucleotide-binding</keyword>
<keyword id="KW-0665">Pyrimidine biosynthesis</keyword>
<keyword id="KW-0808">Transferase</keyword>
<gene>
    <name evidence="1" type="primary">pyrH</name>
    <name type="ordered locus">cgR_1852</name>
</gene>
<accession>A4QF30</accession>
<sequence length="243" mass="26183">MTTSSEQPRTGYKRVMLKLGGEMFGGGKVGVDPDVVDNVARQIAEVAKTGAEIAVVIGGGNFFRGAELQQRGMDRARSDYMGMLGTVMNCLALQDFLGQHGVECRVQTAINMAQVAEPYLPLRAERHLEKGRVVIFGAGMGMPYFSTDTTAAQRALEIGCDVLLMAKAVDGVYSDDPRTNPDAELFTEITPKEVIEKGLKVADATAFSLCMDNKMPILVFNLLTEGNIARAISGERIGTLVES</sequence>
<protein>
    <recommendedName>
        <fullName evidence="1">Uridylate kinase</fullName>
        <shortName evidence="1">UK</shortName>
        <ecNumber evidence="1">2.7.4.22</ecNumber>
    </recommendedName>
    <alternativeName>
        <fullName evidence="1">Uridine monophosphate kinase</fullName>
        <shortName evidence="1">UMP kinase</shortName>
        <shortName evidence="1">UMPK</shortName>
    </alternativeName>
</protein>
<dbReference type="EC" id="2.7.4.22" evidence="1"/>
<dbReference type="EMBL" id="AP009044">
    <property type="protein sequence ID" value="BAF54846.1"/>
    <property type="status" value="ALT_INIT"/>
    <property type="molecule type" value="Genomic_DNA"/>
</dbReference>
<dbReference type="RefSeq" id="WP_006284182.1">
    <property type="nucleotide sequence ID" value="NC_009342.1"/>
</dbReference>
<dbReference type="SMR" id="A4QF30"/>
<dbReference type="GeneID" id="1019980"/>
<dbReference type="KEGG" id="cgt:cgR_1852"/>
<dbReference type="HOGENOM" id="CLU_033861_0_0_11"/>
<dbReference type="PhylomeDB" id="A4QF30"/>
<dbReference type="UniPathway" id="UPA00159">
    <property type="reaction ID" value="UER00275"/>
</dbReference>
<dbReference type="Proteomes" id="UP000006698">
    <property type="component" value="Chromosome"/>
</dbReference>
<dbReference type="GO" id="GO:0005737">
    <property type="term" value="C:cytoplasm"/>
    <property type="evidence" value="ECO:0007669"/>
    <property type="project" value="UniProtKB-SubCell"/>
</dbReference>
<dbReference type="GO" id="GO:0005524">
    <property type="term" value="F:ATP binding"/>
    <property type="evidence" value="ECO:0007669"/>
    <property type="project" value="UniProtKB-KW"/>
</dbReference>
<dbReference type="GO" id="GO:0033862">
    <property type="term" value="F:UMP kinase activity"/>
    <property type="evidence" value="ECO:0007669"/>
    <property type="project" value="UniProtKB-EC"/>
</dbReference>
<dbReference type="GO" id="GO:0044210">
    <property type="term" value="P:'de novo' CTP biosynthetic process"/>
    <property type="evidence" value="ECO:0007669"/>
    <property type="project" value="UniProtKB-UniRule"/>
</dbReference>
<dbReference type="GO" id="GO:0006225">
    <property type="term" value="P:UDP biosynthetic process"/>
    <property type="evidence" value="ECO:0007669"/>
    <property type="project" value="TreeGrafter"/>
</dbReference>
<dbReference type="CDD" id="cd04254">
    <property type="entry name" value="AAK_UMPK-PyrH-Ec"/>
    <property type="match status" value="1"/>
</dbReference>
<dbReference type="FunFam" id="3.40.1160.10:FF:000001">
    <property type="entry name" value="Uridylate kinase"/>
    <property type="match status" value="1"/>
</dbReference>
<dbReference type="Gene3D" id="3.40.1160.10">
    <property type="entry name" value="Acetylglutamate kinase-like"/>
    <property type="match status" value="1"/>
</dbReference>
<dbReference type="HAMAP" id="MF_01220_B">
    <property type="entry name" value="PyrH_B"/>
    <property type="match status" value="1"/>
</dbReference>
<dbReference type="InterPro" id="IPR036393">
    <property type="entry name" value="AceGlu_kinase-like_sf"/>
</dbReference>
<dbReference type="InterPro" id="IPR001048">
    <property type="entry name" value="Asp/Glu/Uridylate_kinase"/>
</dbReference>
<dbReference type="InterPro" id="IPR011817">
    <property type="entry name" value="Uridylate_kinase"/>
</dbReference>
<dbReference type="InterPro" id="IPR015963">
    <property type="entry name" value="Uridylate_kinase_bac"/>
</dbReference>
<dbReference type="NCBIfam" id="TIGR02075">
    <property type="entry name" value="pyrH_bact"/>
    <property type="match status" value="1"/>
</dbReference>
<dbReference type="PANTHER" id="PTHR42833">
    <property type="entry name" value="URIDYLATE KINASE"/>
    <property type="match status" value="1"/>
</dbReference>
<dbReference type="PANTHER" id="PTHR42833:SF4">
    <property type="entry name" value="URIDYLATE KINASE PUMPKIN, CHLOROPLASTIC"/>
    <property type="match status" value="1"/>
</dbReference>
<dbReference type="Pfam" id="PF00696">
    <property type="entry name" value="AA_kinase"/>
    <property type="match status" value="1"/>
</dbReference>
<dbReference type="PIRSF" id="PIRSF005650">
    <property type="entry name" value="Uridylate_kin"/>
    <property type="match status" value="1"/>
</dbReference>
<dbReference type="SUPFAM" id="SSF53633">
    <property type="entry name" value="Carbamate kinase-like"/>
    <property type="match status" value="1"/>
</dbReference>
<name>PYRH_CORGB</name>
<reference key="1">
    <citation type="journal article" date="2007" name="Microbiology">
        <title>Comparative analysis of the Corynebacterium glutamicum group and complete genome sequence of strain R.</title>
        <authorList>
            <person name="Yukawa H."/>
            <person name="Omumasaba C.A."/>
            <person name="Nonaka H."/>
            <person name="Kos P."/>
            <person name="Okai N."/>
            <person name="Suzuki N."/>
            <person name="Suda M."/>
            <person name="Tsuge Y."/>
            <person name="Watanabe J."/>
            <person name="Ikeda Y."/>
            <person name="Vertes A.A."/>
            <person name="Inui M."/>
        </authorList>
    </citation>
    <scope>NUCLEOTIDE SEQUENCE [LARGE SCALE GENOMIC DNA]</scope>
    <source>
        <strain>R</strain>
    </source>
</reference>
<evidence type="ECO:0000255" key="1">
    <source>
        <dbReference type="HAMAP-Rule" id="MF_01220"/>
    </source>
</evidence>
<evidence type="ECO:0000305" key="2"/>
<comment type="function">
    <text evidence="1">Catalyzes the reversible phosphorylation of UMP to UDP.</text>
</comment>
<comment type="catalytic activity">
    <reaction evidence="1">
        <text>UMP + ATP = UDP + ADP</text>
        <dbReference type="Rhea" id="RHEA:24400"/>
        <dbReference type="ChEBI" id="CHEBI:30616"/>
        <dbReference type="ChEBI" id="CHEBI:57865"/>
        <dbReference type="ChEBI" id="CHEBI:58223"/>
        <dbReference type="ChEBI" id="CHEBI:456216"/>
        <dbReference type="EC" id="2.7.4.22"/>
    </reaction>
</comment>
<comment type="activity regulation">
    <text evidence="1">Inhibited by UTP.</text>
</comment>
<comment type="pathway">
    <text evidence="1">Pyrimidine metabolism; CTP biosynthesis via de novo pathway; UDP from UMP (UMPK route): step 1/1.</text>
</comment>
<comment type="subunit">
    <text evidence="1">Homohexamer.</text>
</comment>
<comment type="subcellular location">
    <subcellularLocation>
        <location evidence="1">Cytoplasm</location>
    </subcellularLocation>
</comment>
<comment type="similarity">
    <text evidence="1">Belongs to the UMP kinase family.</text>
</comment>
<comment type="sequence caution" evidence="2">
    <conflict type="erroneous initiation">
        <sequence resource="EMBL-CDS" id="BAF54846"/>
    </conflict>
</comment>
<feature type="chain" id="PRO_0000323828" description="Uridylate kinase">
    <location>
        <begin position="1"/>
        <end position="243"/>
    </location>
</feature>
<feature type="binding site" evidence="1">
    <location>
        <begin position="18"/>
        <end position="21"/>
    </location>
    <ligand>
        <name>ATP</name>
        <dbReference type="ChEBI" id="CHEBI:30616"/>
    </ligand>
</feature>
<feature type="binding site" evidence="1">
    <location>
        <position position="59"/>
    </location>
    <ligand>
        <name>UMP</name>
        <dbReference type="ChEBI" id="CHEBI:57865"/>
    </ligand>
</feature>
<feature type="binding site" evidence="1">
    <location>
        <position position="60"/>
    </location>
    <ligand>
        <name>ATP</name>
        <dbReference type="ChEBI" id="CHEBI:30616"/>
    </ligand>
</feature>
<feature type="binding site" evidence="1">
    <location>
        <position position="64"/>
    </location>
    <ligand>
        <name>ATP</name>
        <dbReference type="ChEBI" id="CHEBI:30616"/>
    </ligand>
</feature>
<feature type="binding site" evidence="1">
    <location>
        <position position="79"/>
    </location>
    <ligand>
        <name>UMP</name>
        <dbReference type="ChEBI" id="CHEBI:57865"/>
    </ligand>
</feature>
<feature type="binding site" evidence="1">
    <location>
        <begin position="140"/>
        <end position="147"/>
    </location>
    <ligand>
        <name>UMP</name>
        <dbReference type="ChEBI" id="CHEBI:57865"/>
    </ligand>
</feature>
<feature type="binding site" evidence="1">
    <location>
        <position position="173"/>
    </location>
    <ligand>
        <name>ATP</name>
        <dbReference type="ChEBI" id="CHEBI:30616"/>
    </ligand>
</feature>
<feature type="binding site" evidence="1">
    <location>
        <position position="176"/>
    </location>
    <ligand>
        <name>ATP</name>
        <dbReference type="ChEBI" id="CHEBI:30616"/>
    </ligand>
</feature>
<organism>
    <name type="scientific">Corynebacterium glutamicum (strain R)</name>
    <dbReference type="NCBI Taxonomy" id="340322"/>
    <lineage>
        <taxon>Bacteria</taxon>
        <taxon>Bacillati</taxon>
        <taxon>Actinomycetota</taxon>
        <taxon>Actinomycetes</taxon>
        <taxon>Mycobacteriales</taxon>
        <taxon>Corynebacteriaceae</taxon>
        <taxon>Corynebacterium</taxon>
    </lineage>
</organism>
<proteinExistence type="inferred from homology"/>